<protein>
    <recommendedName>
        <fullName evidence="1">Large ribosomal subunit protein bL19</fullName>
    </recommendedName>
    <alternativeName>
        <fullName evidence="2">50S ribosomal protein L19</fullName>
    </alternativeName>
</protein>
<sequence>MNLIAKLEQEEIERALAGKTIPEFAPGDTVIVNVNVVEGNRKRVQAYEGVVIAKRNRGLNSSFIVRKISSGEGVERTFQTYSPLLASIVVKRRGDVRRAKLYYLRERSGKSARIKEKLVSKDRAAAAQQ</sequence>
<comment type="function">
    <text evidence="1">This protein is located at the 30S-50S ribosomal subunit interface and may play a role in the structure and function of the aminoacyl-tRNA binding site.</text>
</comment>
<comment type="similarity">
    <text evidence="1">Belongs to the bacterial ribosomal protein bL19 family.</text>
</comment>
<organism>
    <name type="scientific">Burkholderia mallei (strain NCTC 10247)</name>
    <dbReference type="NCBI Taxonomy" id="320389"/>
    <lineage>
        <taxon>Bacteria</taxon>
        <taxon>Pseudomonadati</taxon>
        <taxon>Pseudomonadota</taxon>
        <taxon>Betaproteobacteria</taxon>
        <taxon>Burkholderiales</taxon>
        <taxon>Burkholderiaceae</taxon>
        <taxon>Burkholderia</taxon>
        <taxon>pseudomallei group</taxon>
    </lineage>
</organism>
<evidence type="ECO:0000255" key="1">
    <source>
        <dbReference type="HAMAP-Rule" id="MF_00402"/>
    </source>
</evidence>
<evidence type="ECO:0000305" key="2"/>
<name>RL19_BURM7</name>
<reference key="1">
    <citation type="journal article" date="2010" name="Genome Biol. Evol.">
        <title>Continuing evolution of Burkholderia mallei through genome reduction and large-scale rearrangements.</title>
        <authorList>
            <person name="Losada L."/>
            <person name="Ronning C.M."/>
            <person name="DeShazer D."/>
            <person name="Woods D."/>
            <person name="Fedorova N."/>
            <person name="Kim H.S."/>
            <person name="Shabalina S.A."/>
            <person name="Pearson T.R."/>
            <person name="Brinkac L."/>
            <person name="Tan P."/>
            <person name="Nandi T."/>
            <person name="Crabtree J."/>
            <person name="Badger J."/>
            <person name="Beckstrom-Sternberg S."/>
            <person name="Saqib M."/>
            <person name="Schutzer S.E."/>
            <person name="Keim P."/>
            <person name="Nierman W.C."/>
        </authorList>
    </citation>
    <scope>NUCLEOTIDE SEQUENCE [LARGE SCALE GENOMIC DNA]</scope>
    <source>
        <strain>NCTC 10247</strain>
    </source>
</reference>
<gene>
    <name evidence="1" type="primary">rplS</name>
    <name type="ordered locus">BMA10247_0231</name>
</gene>
<keyword id="KW-0687">Ribonucleoprotein</keyword>
<keyword id="KW-0689">Ribosomal protein</keyword>
<feature type="chain" id="PRO_1000049644" description="Large ribosomal subunit protein bL19">
    <location>
        <begin position="1"/>
        <end position="129"/>
    </location>
</feature>
<proteinExistence type="inferred from homology"/>
<accession>A3MHS0</accession>
<dbReference type="EMBL" id="CP000548">
    <property type="protein sequence ID" value="ABO04477.1"/>
    <property type="molecule type" value="Genomic_DNA"/>
</dbReference>
<dbReference type="RefSeq" id="WP_004189360.1">
    <property type="nucleotide sequence ID" value="NZ_CP007802.1"/>
</dbReference>
<dbReference type="SMR" id="A3MHS0"/>
<dbReference type="GeneID" id="93061076"/>
<dbReference type="KEGG" id="bmaz:BM44_2761"/>
<dbReference type="KEGG" id="bmn:BMA10247_0231"/>
<dbReference type="PATRIC" id="fig|320389.8.peg.3118"/>
<dbReference type="GO" id="GO:0022625">
    <property type="term" value="C:cytosolic large ribosomal subunit"/>
    <property type="evidence" value="ECO:0007669"/>
    <property type="project" value="TreeGrafter"/>
</dbReference>
<dbReference type="GO" id="GO:0003735">
    <property type="term" value="F:structural constituent of ribosome"/>
    <property type="evidence" value="ECO:0007669"/>
    <property type="project" value="InterPro"/>
</dbReference>
<dbReference type="GO" id="GO:0006412">
    <property type="term" value="P:translation"/>
    <property type="evidence" value="ECO:0007669"/>
    <property type="project" value="UniProtKB-UniRule"/>
</dbReference>
<dbReference type="FunFam" id="2.30.30.790:FF:000001">
    <property type="entry name" value="50S ribosomal protein L19"/>
    <property type="match status" value="1"/>
</dbReference>
<dbReference type="Gene3D" id="2.30.30.790">
    <property type="match status" value="1"/>
</dbReference>
<dbReference type="HAMAP" id="MF_00402">
    <property type="entry name" value="Ribosomal_bL19"/>
    <property type="match status" value="1"/>
</dbReference>
<dbReference type="InterPro" id="IPR001857">
    <property type="entry name" value="Ribosomal_bL19"/>
</dbReference>
<dbReference type="InterPro" id="IPR018257">
    <property type="entry name" value="Ribosomal_bL19_CS"/>
</dbReference>
<dbReference type="InterPro" id="IPR038657">
    <property type="entry name" value="Ribosomal_bL19_sf"/>
</dbReference>
<dbReference type="InterPro" id="IPR008991">
    <property type="entry name" value="Translation_prot_SH3-like_sf"/>
</dbReference>
<dbReference type="NCBIfam" id="TIGR01024">
    <property type="entry name" value="rplS_bact"/>
    <property type="match status" value="1"/>
</dbReference>
<dbReference type="PANTHER" id="PTHR15680:SF9">
    <property type="entry name" value="LARGE RIBOSOMAL SUBUNIT PROTEIN BL19M"/>
    <property type="match status" value="1"/>
</dbReference>
<dbReference type="PANTHER" id="PTHR15680">
    <property type="entry name" value="RIBOSOMAL PROTEIN L19"/>
    <property type="match status" value="1"/>
</dbReference>
<dbReference type="Pfam" id="PF01245">
    <property type="entry name" value="Ribosomal_L19"/>
    <property type="match status" value="1"/>
</dbReference>
<dbReference type="PIRSF" id="PIRSF002191">
    <property type="entry name" value="Ribosomal_L19"/>
    <property type="match status" value="1"/>
</dbReference>
<dbReference type="PRINTS" id="PR00061">
    <property type="entry name" value="RIBOSOMALL19"/>
</dbReference>
<dbReference type="SUPFAM" id="SSF50104">
    <property type="entry name" value="Translation proteins SH3-like domain"/>
    <property type="match status" value="1"/>
</dbReference>
<dbReference type="PROSITE" id="PS01015">
    <property type="entry name" value="RIBOSOMAL_L19"/>
    <property type="match status" value="1"/>
</dbReference>